<organism>
    <name type="scientific">Coxiella burnetii (strain Dugway 5J108-111)</name>
    <dbReference type="NCBI Taxonomy" id="434922"/>
    <lineage>
        <taxon>Bacteria</taxon>
        <taxon>Pseudomonadati</taxon>
        <taxon>Pseudomonadota</taxon>
        <taxon>Gammaproteobacteria</taxon>
        <taxon>Legionellales</taxon>
        <taxon>Coxiellaceae</taxon>
        <taxon>Coxiella</taxon>
    </lineage>
</organism>
<evidence type="ECO:0000255" key="1">
    <source>
        <dbReference type="HAMAP-Rule" id="MF_00203"/>
    </source>
</evidence>
<keyword id="KW-0963">Cytoplasm</keyword>
<keyword id="KW-0227">DNA damage</keyword>
<keyword id="KW-0228">DNA excision</keyword>
<keyword id="KW-0234">DNA repair</keyword>
<keyword id="KW-0267">Excision nuclease</keyword>
<keyword id="KW-0742">SOS response</keyword>
<proteinExistence type="inferred from homology"/>
<comment type="function">
    <text evidence="1">The UvrABC repair system catalyzes the recognition and processing of DNA lesions. UvrC both incises the 5' and 3' sides of the lesion. The N-terminal half is responsible for the 3' incision and the C-terminal half is responsible for the 5' incision.</text>
</comment>
<comment type="subunit">
    <text evidence="1">Interacts with UvrB in an incision complex.</text>
</comment>
<comment type="subcellular location">
    <subcellularLocation>
        <location evidence="1">Cytoplasm</location>
    </subcellularLocation>
</comment>
<comment type="similarity">
    <text evidence="1">Belongs to the UvrC family.</text>
</comment>
<feature type="chain" id="PRO_1000077777" description="UvrABC system protein C">
    <location>
        <begin position="1"/>
        <end position="609"/>
    </location>
</feature>
<feature type="domain" description="GIY-YIG" evidence="1">
    <location>
        <begin position="15"/>
        <end position="92"/>
    </location>
</feature>
<feature type="domain" description="UVR" evidence="1">
    <location>
        <begin position="202"/>
        <end position="237"/>
    </location>
</feature>
<accession>A9KFP2</accession>
<dbReference type="EMBL" id="CP000733">
    <property type="protein sequence ID" value="ABS77103.1"/>
    <property type="molecule type" value="Genomic_DNA"/>
</dbReference>
<dbReference type="RefSeq" id="WP_011997009.1">
    <property type="nucleotide sequence ID" value="NC_009727.1"/>
</dbReference>
<dbReference type="SMR" id="A9KFP2"/>
<dbReference type="KEGG" id="cbd:CBUD_1276"/>
<dbReference type="HOGENOM" id="CLU_014841_3_0_6"/>
<dbReference type="Proteomes" id="UP000008555">
    <property type="component" value="Chromosome"/>
</dbReference>
<dbReference type="GO" id="GO:0005737">
    <property type="term" value="C:cytoplasm"/>
    <property type="evidence" value="ECO:0007669"/>
    <property type="project" value="UniProtKB-SubCell"/>
</dbReference>
<dbReference type="GO" id="GO:0009380">
    <property type="term" value="C:excinuclease repair complex"/>
    <property type="evidence" value="ECO:0007669"/>
    <property type="project" value="InterPro"/>
</dbReference>
<dbReference type="GO" id="GO:0003677">
    <property type="term" value="F:DNA binding"/>
    <property type="evidence" value="ECO:0007669"/>
    <property type="project" value="UniProtKB-UniRule"/>
</dbReference>
<dbReference type="GO" id="GO:0009381">
    <property type="term" value="F:excinuclease ABC activity"/>
    <property type="evidence" value="ECO:0007669"/>
    <property type="project" value="UniProtKB-UniRule"/>
</dbReference>
<dbReference type="GO" id="GO:0006289">
    <property type="term" value="P:nucleotide-excision repair"/>
    <property type="evidence" value="ECO:0007669"/>
    <property type="project" value="UniProtKB-UniRule"/>
</dbReference>
<dbReference type="GO" id="GO:0009432">
    <property type="term" value="P:SOS response"/>
    <property type="evidence" value="ECO:0007669"/>
    <property type="project" value="UniProtKB-UniRule"/>
</dbReference>
<dbReference type="CDD" id="cd10434">
    <property type="entry name" value="GIY-YIG_UvrC_Cho"/>
    <property type="match status" value="1"/>
</dbReference>
<dbReference type="FunFam" id="1.10.150.20:FF:000005">
    <property type="entry name" value="UvrABC system protein C"/>
    <property type="match status" value="1"/>
</dbReference>
<dbReference type="FunFam" id="3.30.420.340:FF:000001">
    <property type="entry name" value="UvrABC system protein C"/>
    <property type="match status" value="1"/>
</dbReference>
<dbReference type="FunFam" id="3.40.1440.10:FF:000001">
    <property type="entry name" value="UvrABC system protein C"/>
    <property type="match status" value="1"/>
</dbReference>
<dbReference type="FunFam" id="4.10.860.10:FF:000002">
    <property type="entry name" value="UvrABC system protein C"/>
    <property type="match status" value="1"/>
</dbReference>
<dbReference type="Gene3D" id="1.10.150.20">
    <property type="entry name" value="5' to 3' exonuclease, C-terminal subdomain"/>
    <property type="match status" value="1"/>
</dbReference>
<dbReference type="Gene3D" id="3.40.1440.10">
    <property type="entry name" value="GIY-YIG endonuclease"/>
    <property type="match status" value="1"/>
</dbReference>
<dbReference type="Gene3D" id="4.10.860.10">
    <property type="entry name" value="UVR domain"/>
    <property type="match status" value="1"/>
</dbReference>
<dbReference type="Gene3D" id="3.30.420.340">
    <property type="entry name" value="UvrC, RNAse H endonuclease domain"/>
    <property type="match status" value="1"/>
</dbReference>
<dbReference type="HAMAP" id="MF_00203">
    <property type="entry name" value="UvrC"/>
    <property type="match status" value="1"/>
</dbReference>
<dbReference type="InterPro" id="IPR000305">
    <property type="entry name" value="GIY-YIG_endonuc"/>
</dbReference>
<dbReference type="InterPro" id="IPR035901">
    <property type="entry name" value="GIY-YIG_endonuc_sf"/>
</dbReference>
<dbReference type="InterPro" id="IPR047296">
    <property type="entry name" value="GIY-YIG_UvrC_Cho"/>
</dbReference>
<dbReference type="InterPro" id="IPR003583">
    <property type="entry name" value="Hlx-hairpin-Hlx_DNA-bd_motif"/>
</dbReference>
<dbReference type="InterPro" id="IPR010994">
    <property type="entry name" value="RuvA_2-like"/>
</dbReference>
<dbReference type="InterPro" id="IPR001943">
    <property type="entry name" value="UVR_dom"/>
</dbReference>
<dbReference type="InterPro" id="IPR036876">
    <property type="entry name" value="UVR_dom_sf"/>
</dbReference>
<dbReference type="InterPro" id="IPR050066">
    <property type="entry name" value="UvrABC_protein_C"/>
</dbReference>
<dbReference type="InterPro" id="IPR004791">
    <property type="entry name" value="UvrC"/>
</dbReference>
<dbReference type="InterPro" id="IPR001162">
    <property type="entry name" value="UvrC_RNase_H_dom"/>
</dbReference>
<dbReference type="InterPro" id="IPR038476">
    <property type="entry name" value="UvrC_RNase_H_dom_sf"/>
</dbReference>
<dbReference type="NCBIfam" id="NF001824">
    <property type="entry name" value="PRK00558.1-5"/>
    <property type="match status" value="1"/>
</dbReference>
<dbReference type="NCBIfam" id="TIGR00194">
    <property type="entry name" value="uvrC"/>
    <property type="match status" value="1"/>
</dbReference>
<dbReference type="PANTHER" id="PTHR30562:SF1">
    <property type="entry name" value="UVRABC SYSTEM PROTEIN C"/>
    <property type="match status" value="1"/>
</dbReference>
<dbReference type="PANTHER" id="PTHR30562">
    <property type="entry name" value="UVRC/OXIDOREDUCTASE"/>
    <property type="match status" value="1"/>
</dbReference>
<dbReference type="Pfam" id="PF01541">
    <property type="entry name" value="GIY-YIG"/>
    <property type="match status" value="1"/>
</dbReference>
<dbReference type="Pfam" id="PF14520">
    <property type="entry name" value="HHH_5"/>
    <property type="match status" value="1"/>
</dbReference>
<dbReference type="Pfam" id="PF02151">
    <property type="entry name" value="UVR"/>
    <property type="match status" value="1"/>
</dbReference>
<dbReference type="Pfam" id="PF22920">
    <property type="entry name" value="UvrC_RNaseH"/>
    <property type="match status" value="1"/>
</dbReference>
<dbReference type="Pfam" id="PF08459">
    <property type="entry name" value="UvrC_RNaseH_dom"/>
    <property type="match status" value="1"/>
</dbReference>
<dbReference type="SMART" id="SM00465">
    <property type="entry name" value="GIYc"/>
    <property type="match status" value="1"/>
</dbReference>
<dbReference type="SMART" id="SM00278">
    <property type="entry name" value="HhH1"/>
    <property type="match status" value="2"/>
</dbReference>
<dbReference type="SUPFAM" id="SSF46600">
    <property type="entry name" value="C-terminal UvrC-binding domain of UvrB"/>
    <property type="match status" value="1"/>
</dbReference>
<dbReference type="SUPFAM" id="SSF82771">
    <property type="entry name" value="GIY-YIG endonuclease"/>
    <property type="match status" value="1"/>
</dbReference>
<dbReference type="SUPFAM" id="SSF47781">
    <property type="entry name" value="RuvA domain 2-like"/>
    <property type="match status" value="1"/>
</dbReference>
<dbReference type="PROSITE" id="PS50164">
    <property type="entry name" value="GIY_YIG"/>
    <property type="match status" value="1"/>
</dbReference>
<dbReference type="PROSITE" id="PS50151">
    <property type="entry name" value="UVR"/>
    <property type="match status" value="1"/>
</dbReference>
<dbReference type="PROSITE" id="PS50165">
    <property type="entry name" value="UVRC"/>
    <property type="match status" value="1"/>
</dbReference>
<sequence length="609" mass="69061">MTIDNPSAFLKTLPTGSGVYQIQDAQGKVIYVGKARNLQKRVSSYFRRQLDSKTQAMMAQVQSIQTTITRNENEALLLEASFIKQFRPRYNVLLRDDKSYPYLYLATHQKFPRLDFYRGAKKAPGRYFGPYPNAGSVRENLALIQKLFKLRQCSESFFKNRTRPCLQYQIKRCTAPCVGYVNEQEYRRQVEDAILFFEGKNDQVIIKLTERMEVASENLVFEEAAHYRDQIRQLRRLQKQQIITGGKGNIDIIGIAESNGAIGFAILFIRSGRMIGHKPFFPNTPLGTTLQTALVEFIPQYYLSPLRNGDIPERIVTSEPLEDRLWIQRALSSGLNRRLAITDQKRAPYKQWQAMAALNAAQALSQHLAQKNTFALKLEAIQKSLALPNPIARIECFDISHTLGEATVASCVVFGEEGLIKKDYRRFNISGVTPGDDYGALRQALTRRYVRLKEGEGILPDVLLIDGGMGQLRQAAEVLEELQVSGVILTAIAKGPGRKAGLEKLFVWGRREEIHLPADNIAFHLIQQIRDEAHRFAITAHCNRRAKRRVESTLQEIEGIGPKRRQKLLKYFGGLQELQRASIEEIARVPGVSETLAKAIYDACHQHKG</sequence>
<gene>
    <name evidence="1" type="primary">uvrC</name>
    <name type="ordered locus">CBUD_1276</name>
</gene>
<name>UVRC_COXBN</name>
<reference key="1">
    <citation type="journal article" date="2009" name="Infect. Immun.">
        <title>Comparative genomics reveal extensive transposon-mediated genomic plasticity and diversity among potential effector proteins within the genus Coxiella.</title>
        <authorList>
            <person name="Beare P.A."/>
            <person name="Unsworth N."/>
            <person name="Andoh M."/>
            <person name="Voth D.E."/>
            <person name="Omsland A."/>
            <person name="Gilk S.D."/>
            <person name="Williams K.P."/>
            <person name="Sobral B.W."/>
            <person name="Kupko J.J. III"/>
            <person name="Porcella S.F."/>
            <person name="Samuel J.E."/>
            <person name="Heinzen R.A."/>
        </authorList>
    </citation>
    <scope>NUCLEOTIDE SEQUENCE [LARGE SCALE GENOMIC DNA]</scope>
    <source>
        <strain>Dugway 5J108-111</strain>
    </source>
</reference>
<protein>
    <recommendedName>
        <fullName evidence="1">UvrABC system protein C</fullName>
        <shortName evidence="1">Protein UvrC</shortName>
    </recommendedName>
    <alternativeName>
        <fullName evidence="1">Excinuclease ABC subunit C</fullName>
    </alternativeName>
</protein>